<dbReference type="EMBL" id="CR380958">
    <property type="protein sequence ID" value="CAG62049.1"/>
    <property type="molecule type" value="Genomic_DNA"/>
</dbReference>
<dbReference type="RefSeq" id="XP_449079.1">
    <property type="nucleotide sequence ID" value="XM_449079.1"/>
</dbReference>
<dbReference type="SMR" id="Q6FL15"/>
<dbReference type="FunCoup" id="Q6FL15">
    <property type="interactions" value="1182"/>
</dbReference>
<dbReference type="STRING" id="284593.Q6FL15"/>
<dbReference type="EnsemblFungi" id="CAGL0L06952g-T">
    <property type="protein sequence ID" value="CAGL0L06952g-T-p1"/>
    <property type="gene ID" value="CAGL0L06952g"/>
</dbReference>
<dbReference type="GeneID" id="2890824"/>
<dbReference type="KEGG" id="cgr:2890824"/>
<dbReference type="CGD" id="CAL0135416">
    <property type="gene designation" value="TIF34"/>
</dbReference>
<dbReference type="VEuPathDB" id="FungiDB:B1J91_L06952g"/>
<dbReference type="VEuPathDB" id="FungiDB:CAGL0L06952g"/>
<dbReference type="eggNOG" id="KOG0643">
    <property type="taxonomic scope" value="Eukaryota"/>
</dbReference>
<dbReference type="HOGENOM" id="CLU_043845_0_1_1"/>
<dbReference type="InParanoid" id="Q6FL15"/>
<dbReference type="OMA" id="VWFSHNG"/>
<dbReference type="Proteomes" id="UP000002428">
    <property type="component" value="Chromosome L"/>
</dbReference>
<dbReference type="GO" id="GO:0016282">
    <property type="term" value="C:eukaryotic 43S preinitiation complex"/>
    <property type="evidence" value="ECO:0007669"/>
    <property type="project" value="UniProtKB-UniRule"/>
</dbReference>
<dbReference type="GO" id="GO:0033290">
    <property type="term" value="C:eukaryotic 48S preinitiation complex"/>
    <property type="evidence" value="ECO:0007669"/>
    <property type="project" value="UniProtKB-UniRule"/>
</dbReference>
<dbReference type="GO" id="GO:0071541">
    <property type="term" value="C:eukaryotic translation initiation factor 3 complex, eIF3m"/>
    <property type="evidence" value="ECO:0007669"/>
    <property type="project" value="TreeGrafter"/>
</dbReference>
<dbReference type="GO" id="GO:0043614">
    <property type="term" value="C:multi-eIF complex"/>
    <property type="evidence" value="ECO:0007669"/>
    <property type="project" value="EnsemblFungi"/>
</dbReference>
<dbReference type="GO" id="GO:0003723">
    <property type="term" value="F:RNA binding"/>
    <property type="evidence" value="ECO:0007669"/>
    <property type="project" value="TreeGrafter"/>
</dbReference>
<dbReference type="GO" id="GO:0003743">
    <property type="term" value="F:translation initiation factor activity"/>
    <property type="evidence" value="ECO:0007669"/>
    <property type="project" value="UniProtKB-UniRule"/>
</dbReference>
<dbReference type="GO" id="GO:0001732">
    <property type="term" value="P:formation of cytoplasmic translation initiation complex"/>
    <property type="evidence" value="ECO:0007669"/>
    <property type="project" value="UniProtKB-UniRule"/>
</dbReference>
<dbReference type="GO" id="GO:0002188">
    <property type="term" value="P:translation reinitiation"/>
    <property type="evidence" value="ECO:0007669"/>
    <property type="project" value="EnsemblFungi"/>
</dbReference>
<dbReference type="FunFam" id="2.130.10.10:FF:000127">
    <property type="entry name" value="Eukaryotic translation initiation factor 3 subunit I"/>
    <property type="match status" value="1"/>
</dbReference>
<dbReference type="Gene3D" id="2.130.10.10">
    <property type="entry name" value="YVTN repeat-like/Quinoprotein amine dehydrogenase"/>
    <property type="match status" value="1"/>
</dbReference>
<dbReference type="HAMAP" id="MF_03008">
    <property type="entry name" value="eIF3i"/>
    <property type="match status" value="1"/>
</dbReference>
<dbReference type="InterPro" id="IPR027525">
    <property type="entry name" value="eIF3i"/>
</dbReference>
<dbReference type="InterPro" id="IPR015943">
    <property type="entry name" value="WD40/YVTN_repeat-like_dom_sf"/>
</dbReference>
<dbReference type="InterPro" id="IPR036322">
    <property type="entry name" value="WD40_repeat_dom_sf"/>
</dbReference>
<dbReference type="InterPro" id="IPR001680">
    <property type="entry name" value="WD40_rpt"/>
</dbReference>
<dbReference type="PANTHER" id="PTHR19877">
    <property type="entry name" value="EUKARYOTIC TRANSLATION INITIATION FACTOR 3 SUBUNIT I"/>
    <property type="match status" value="1"/>
</dbReference>
<dbReference type="PANTHER" id="PTHR19877:SF1">
    <property type="entry name" value="EUKARYOTIC TRANSLATION INITIATION FACTOR 3 SUBUNIT I"/>
    <property type="match status" value="1"/>
</dbReference>
<dbReference type="Pfam" id="PF24805">
    <property type="entry name" value="EIF3I"/>
    <property type="match status" value="1"/>
</dbReference>
<dbReference type="SMART" id="SM00320">
    <property type="entry name" value="WD40"/>
    <property type="match status" value="6"/>
</dbReference>
<dbReference type="SUPFAM" id="SSF50978">
    <property type="entry name" value="WD40 repeat-like"/>
    <property type="match status" value="1"/>
</dbReference>
<dbReference type="PROSITE" id="PS50082">
    <property type="entry name" value="WD_REPEATS_2"/>
    <property type="match status" value="3"/>
</dbReference>
<dbReference type="PROSITE" id="PS50294">
    <property type="entry name" value="WD_REPEATS_REGION"/>
    <property type="match status" value="2"/>
</dbReference>
<accession>Q6FL15</accession>
<protein>
    <recommendedName>
        <fullName evidence="1">Eukaryotic translation initiation factor 3 subunit I</fullName>
        <shortName evidence="1">eIF3i</shortName>
    </recommendedName>
    <alternativeName>
        <fullName evidence="1">Eukaryotic translation initiation factor 3 39 kDa subunit homolog</fullName>
        <shortName evidence="1">eIF-3 39 kDa subunit homolog</shortName>
    </alternativeName>
</protein>
<feature type="chain" id="PRO_0000365362" description="Eukaryotic translation initiation factor 3 subunit I">
    <location>
        <begin position="1"/>
        <end position="347"/>
    </location>
</feature>
<feature type="repeat" description="WD 1">
    <location>
        <begin position="8"/>
        <end position="49"/>
    </location>
</feature>
<feature type="repeat" description="WD 2">
    <location>
        <begin position="51"/>
        <end position="89"/>
    </location>
</feature>
<feature type="repeat" description="WD 3">
    <location>
        <begin position="149"/>
        <end position="190"/>
    </location>
</feature>
<feature type="repeat" description="WD 4">
    <location>
        <begin position="194"/>
        <end position="233"/>
    </location>
</feature>
<feature type="repeat" description="WD 5">
    <location>
        <begin position="291"/>
        <end position="330"/>
    </location>
</feature>
<keyword id="KW-0963">Cytoplasm</keyword>
<keyword id="KW-0396">Initiation factor</keyword>
<keyword id="KW-0648">Protein biosynthesis</keyword>
<keyword id="KW-1185">Reference proteome</keyword>
<keyword id="KW-0677">Repeat</keyword>
<keyword id="KW-0853">WD repeat</keyword>
<proteinExistence type="inferred from homology"/>
<reference key="1">
    <citation type="journal article" date="2004" name="Nature">
        <title>Genome evolution in yeasts.</title>
        <authorList>
            <person name="Dujon B."/>
            <person name="Sherman D."/>
            <person name="Fischer G."/>
            <person name="Durrens P."/>
            <person name="Casaregola S."/>
            <person name="Lafontaine I."/>
            <person name="de Montigny J."/>
            <person name="Marck C."/>
            <person name="Neuveglise C."/>
            <person name="Talla E."/>
            <person name="Goffard N."/>
            <person name="Frangeul L."/>
            <person name="Aigle M."/>
            <person name="Anthouard V."/>
            <person name="Babour A."/>
            <person name="Barbe V."/>
            <person name="Barnay S."/>
            <person name="Blanchin S."/>
            <person name="Beckerich J.-M."/>
            <person name="Beyne E."/>
            <person name="Bleykasten C."/>
            <person name="Boisrame A."/>
            <person name="Boyer J."/>
            <person name="Cattolico L."/>
            <person name="Confanioleri F."/>
            <person name="de Daruvar A."/>
            <person name="Despons L."/>
            <person name="Fabre E."/>
            <person name="Fairhead C."/>
            <person name="Ferry-Dumazet H."/>
            <person name="Groppi A."/>
            <person name="Hantraye F."/>
            <person name="Hennequin C."/>
            <person name="Jauniaux N."/>
            <person name="Joyet P."/>
            <person name="Kachouri R."/>
            <person name="Kerrest A."/>
            <person name="Koszul R."/>
            <person name="Lemaire M."/>
            <person name="Lesur I."/>
            <person name="Ma L."/>
            <person name="Muller H."/>
            <person name="Nicaud J.-M."/>
            <person name="Nikolski M."/>
            <person name="Oztas S."/>
            <person name="Ozier-Kalogeropoulos O."/>
            <person name="Pellenz S."/>
            <person name="Potier S."/>
            <person name="Richard G.-F."/>
            <person name="Straub M.-L."/>
            <person name="Suleau A."/>
            <person name="Swennen D."/>
            <person name="Tekaia F."/>
            <person name="Wesolowski-Louvel M."/>
            <person name="Westhof E."/>
            <person name="Wirth B."/>
            <person name="Zeniou-Meyer M."/>
            <person name="Zivanovic Y."/>
            <person name="Bolotin-Fukuhara M."/>
            <person name="Thierry A."/>
            <person name="Bouchier C."/>
            <person name="Caudron B."/>
            <person name="Scarpelli C."/>
            <person name="Gaillardin C."/>
            <person name="Weissenbach J."/>
            <person name="Wincker P."/>
            <person name="Souciet J.-L."/>
        </authorList>
    </citation>
    <scope>NUCLEOTIDE SEQUENCE [LARGE SCALE GENOMIC DNA]</scope>
    <source>
        <strain>ATCC 2001 / BCRC 20586 / JCM 3761 / NBRC 0622 / NRRL Y-65 / CBS 138</strain>
    </source>
</reference>
<evidence type="ECO:0000255" key="1">
    <source>
        <dbReference type="HAMAP-Rule" id="MF_03008"/>
    </source>
</evidence>
<name>EIF3I_CANGA</name>
<gene>
    <name evidence="1" type="primary">TIF34</name>
    <name type="ordered locus">CAGL0L06952g</name>
</gene>
<sequence length="347" mass="38661">MRPIVLMGHERPLTQVKYNREGDLLFTCSKDISASVWYSNNGERLGTLDGHMGSIWSIDSDHTSLYCVTGSADYTIKVWTLMNGQCVQTWNCPVPVKRVEFSPCGKYILAILDNVMKKPGSIEIYEVKRNPETNEITEFVEEPIHSIVTHEGLDAASVAGWSGEGKYIIAGHKDGKISKYDTQDGYKLVESQQVHKDSVSDLQFSPDRTYFITCSRDSNAHIIDIETFKVLKTYETDSPLNSAAITPLKEFVILGGGQDASEVTTTSASEGKFEARIYHKVFEEEIGRVVGHFGPLNSIAVSPQGTSYTSGGEEGLVRLHHFEKSYFDFKYDVEKAADAKEHISHEA</sequence>
<comment type="function">
    <text evidence="1">Component of the eukaryotic translation initiation factor 3 (eIF-3) complex, which is involved in protein synthesis of a specialized repertoire of mRNAs and, together with other initiation factors, stimulates binding of mRNA and methionyl-tRNAi to the 40S ribosome. The eIF-3 complex specifically targets and initiates translation of a subset of mRNAs involved in cell proliferation.</text>
</comment>
<comment type="subunit">
    <text evidence="1">Component of the eukaryotic translation initiation factor 3 (eIF-3) complex.</text>
</comment>
<comment type="subcellular location">
    <subcellularLocation>
        <location evidence="1">Cytoplasm</location>
    </subcellularLocation>
</comment>
<comment type="similarity">
    <text evidence="1">Belongs to the eIF-3 subunit I family.</text>
</comment>
<organism>
    <name type="scientific">Candida glabrata (strain ATCC 2001 / BCRC 20586 / JCM 3761 / NBRC 0622 / NRRL Y-65 / CBS 138)</name>
    <name type="common">Yeast</name>
    <name type="synonym">Nakaseomyces glabratus</name>
    <dbReference type="NCBI Taxonomy" id="284593"/>
    <lineage>
        <taxon>Eukaryota</taxon>
        <taxon>Fungi</taxon>
        <taxon>Dikarya</taxon>
        <taxon>Ascomycota</taxon>
        <taxon>Saccharomycotina</taxon>
        <taxon>Saccharomycetes</taxon>
        <taxon>Saccharomycetales</taxon>
        <taxon>Saccharomycetaceae</taxon>
        <taxon>Nakaseomyces</taxon>
    </lineage>
</organism>